<sequence>MSIRAKRRKRASPTDLYRTCKQAGTCPPDIIPRVEQNTLADKILKWGSLGVFFGGLGIGTGSGTGGRTGYIPVGSRPTTVVDIGPTPRPPVIIEPVGASEPSIVTLVEDSSIINAGASHPTFTGTGGFEVTTSTVTDPAVLDITPSGTSVQVSSSSFLNPLYTEPAIVEAPQTGEVSGHVLVSTATSGSHGYEEIPMQTFATSGGSGTEPISSTPLPGVRRVAGPRLYSRANQQVQVRDPAFLARPADLVTFDNPVYDPEETIIFQHPDLHEPPDPDFLDIVALHRPALTSRRGTVRFSRLGRRATLRTRSGKQIGARVHFYHDISPIGTEELEMEPLLPPASTDNTDMLYDVYADSDVLQPLLDELPAAPRGSLSLADTAVSATSASTLRGSTTVPLSSGIDVPVYTGPDIEPPNVPGMGPLIPVAPSLPSSVYIFGGDYYLMPSYVLWPKRRKRVHYFFADGFVAA</sequence>
<accession>P25487</accession>
<evidence type="ECO:0000255" key="1">
    <source>
        <dbReference type="HAMAP-Rule" id="MF_04003"/>
    </source>
</evidence>
<organism>
    <name type="scientific">Human papillomavirus type 2a</name>
    <dbReference type="NCBI Taxonomy" id="10584"/>
    <lineage>
        <taxon>Viruses</taxon>
        <taxon>Monodnaviria</taxon>
        <taxon>Shotokuvirae</taxon>
        <taxon>Cossaviricota</taxon>
        <taxon>Papovaviricetes</taxon>
        <taxon>Zurhausenvirales</taxon>
        <taxon>Papillomaviridae</taxon>
        <taxon>Firstpapillomavirinae</taxon>
        <taxon>Alphapapillomavirus</taxon>
        <taxon>Alphapapillomavirus 4</taxon>
    </lineage>
</organism>
<name>VL2_HPV2A</name>
<feature type="chain" id="PRO_0000133567" description="Minor capsid protein L2">
    <location>
        <begin position="1"/>
        <end position="468"/>
    </location>
</feature>
<feature type="short sequence motif" description="Nuclear localization signal" evidence="1">
    <location>
        <begin position="1"/>
        <end position="11"/>
    </location>
</feature>
<feature type="short sequence motif" description="Nuclear localization signal" evidence="1">
    <location>
        <begin position="449"/>
        <end position="457"/>
    </location>
</feature>
<feature type="disulfide bond" evidence="1">
    <location>
        <begin position="20"/>
        <end position="26"/>
    </location>
</feature>
<gene>
    <name evidence="1" type="primary">L2</name>
</gene>
<organismHost>
    <name type="scientific">Homo sapiens</name>
    <name type="common">Human</name>
    <dbReference type="NCBI Taxonomy" id="9606"/>
</organismHost>
<keyword id="KW-0167">Capsid protein</keyword>
<keyword id="KW-1176">Cytoplasmic inwards viral transport</keyword>
<keyword id="KW-1015">Disulfide bond</keyword>
<keyword id="KW-0238">DNA-binding</keyword>
<keyword id="KW-1039">Host endosome</keyword>
<keyword id="KW-1040">Host Golgi apparatus</keyword>
<keyword id="KW-1048">Host nucleus</keyword>
<keyword id="KW-0945">Host-virus interaction</keyword>
<keyword id="KW-0426">Late protein</keyword>
<keyword id="KW-1177">Microtubular inwards viral transport</keyword>
<keyword id="KW-0597">Phosphoprotein</keyword>
<keyword id="KW-1163">Viral penetration into host nucleus</keyword>
<keyword id="KW-0946">Virion</keyword>
<keyword id="KW-1160">Virus entry into host cell</keyword>
<protein>
    <recommendedName>
        <fullName evidence="1">Minor capsid protein L2</fullName>
    </recommendedName>
</protein>
<comment type="function">
    <text evidence="1">Minor protein of the capsid that localizes along the inner surface of the virion, within the central cavities beneath the L1 pentamers. Plays a role in capsid stabilization through interaction with the major capsid protein L1. Once the virion enters the host cell, L2 escorts the genomic DNA into the nucleus by promoting escape from the endosomal compartments and traffic through the host Golgi network. Mechanistically, the C-terminus of L2 possesses a cell-penetrating peptide that protudes from the host endosome, interacts with host cytoplasmic retromer cargo and thereby mediates the capsid delivery to the host trans-Golgi network. Plays a role through its interaction with host dynein in the intracellular microtubule-dependent transport of viral capsid toward the nucleus. Mediates the viral genome import into the nucleus through binding to host importins. Once within the nucleus, L2 localizes viral genomes to host PML bodies in order to activate early gene expression for establishment of infection. Later on, promotes late gene expression by interacting with the viral E2 protein and by inhibiting its transcriptional activation functions. During virion assembly, encapsidates the genome by direct interaction with the viral DNA.</text>
</comment>
<comment type="subunit">
    <text evidence="1">Interacts with major capsid protein L1. Interacts with E2; this interaction inhibits E2 transcriptional activity but not the DNA replication function E2. Interacts with host GADD45GIP1. Interacts with host HSPA8; this interaction is required for L2 nuclear translocation. Interacts with host importins KPNB2 and KPNB3. Forms a complex with importin alpha2-beta1 heterodimers via interaction with the importin alpha2 adapter. Interacts with host DYNLT1; this interaction is essential for virus intracellular transport during entry. Interacts (via C-terminus) with host retromer subunits VPS35 and VPS29.</text>
</comment>
<comment type="subcellular location">
    <subcellularLocation>
        <location evidence="1">Virion</location>
    </subcellularLocation>
    <subcellularLocation>
        <location evidence="1">Host nucleus</location>
    </subcellularLocation>
    <subcellularLocation>
        <location evidence="1">Host early endosome</location>
    </subcellularLocation>
    <subcellularLocation>
        <location evidence="1">Host Golgi apparatus</location>
    </subcellularLocation>
</comment>
<comment type="PTM">
    <text evidence="1">Highly phosphorylated.</text>
</comment>
<comment type="similarity">
    <text evidence="1">Belongs to the papillomaviridae L2 protein family.</text>
</comment>
<proteinExistence type="inferred from homology"/>
<reference key="1">
    <citation type="journal article" date="1990" name="Virus Res.">
        <title>A comparative sequence analysis of two human papillomavirus (HPV) types 2a and 57.</title>
        <authorList>
            <person name="Hirsch-Behnam A."/>
            <person name="Delius H."/>
            <person name="de Villiers E.M."/>
        </authorList>
    </citation>
    <scope>NUCLEOTIDE SEQUENCE [GENOMIC DNA]</scope>
</reference>
<dbReference type="EMBL" id="X55964">
    <property type="status" value="NOT_ANNOTATED_CDS"/>
    <property type="molecule type" value="Genomic_DNA"/>
</dbReference>
<dbReference type="PIR" id="S15619">
    <property type="entry name" value="S15619"/>
</dbReference>
<dbReference type="Proteomes" id="UP000007710">
    <property type="component" value="Segment"/>
</dbReference>
<dbReference type="GO" id="GO:0043657">
    <property type="term" value="C:host cell"/>
    <property type="evidence" value="ECO:0007669"/>
    <property type="project" value="GOC"/>
</dbReference>
<dbReference type="GO" id="GO:0044174">
    <property type="term" value="C:host cell endosome"/>
    <property type="evidence" value="ECO:0007669"/>
    <property type="project" value="UniProtKB-KW"/>
</dbReference>
<dbReference type="GO" id="GO:0044177">
    <property type="term" value="C:host cell Golgi apparatus"/>
    <property type="evidence" value="ECO:0007669"/>
    <property type="project" value="UniProtKB-SubCell"/>
</dbReference>
<dbReference type="GO" id="GO:0042025">
    <property type="term" value="C:host cell nucleus"/>
    <property type="evidence" value="ECO:0007669"/>
    <property type="project" value="UniProtKB-SubCell"/>
</dbReference>
<dbReference type="GO" id="GO:0019028">
    <property type="term" value="C:viral capsid"/>
    <property type="evidence" value="ECO:0007669"/>
    <property type="project" value="UniProtKB-UniRule"/>
</dbReference>
<dbReference type="GO" id="GO:0003677">
    <property type="term" value="F:DNA binding"/>
    <property type="evidence" value="ECO:0007669"/>
    <property type="project" value="UniProtKB-UniRule"/>
</dbReference>
<dbReference type="GO" id="GO:0005198">
    <property type="term" value="F:structural molecule activity"/>
    <property type="evidence" value="ECO:0007669"/>
    <property type="project" value="UniProtKB-UniRule"/>
</dbReference>
<dbReference type="GO" id="GO:0075521">
    <property type="term" value="P:microtubule-dependent intracellular transport of viral material towards nucleus"/>
    <property type="evidence" value="ECO:0007669"/>
    <property type="project" value="UniProtKB-UniRule"/>
</dbReference>
<dbReference type="GO" id="GO:0046718">
    <property type="term" value="P:symbiont entry into host cell"/>
    <property type="evidence" value="ECO:0007669"/>
    <property type="project" value="UniProtKB-KW"/>
</dbReference>
<dbReference type="GO" id="GO:0075732">
    <property type="term" value="P:viral penetration into host nucleus"/>
    <property type="evidence" value="ECO:0007669"/>
    <property type="project" value="UniProtKB-KW"/>
</dbReference>
<dbReference type="HAMAP" id="MF_04003">
    <property type="entry name" value="PPV_L2"/>
    <property type="match status" value="1"/>
</dbReference>
<dbReference type="InterPro" id="IPR000784">
    <property type="entry name" value="Late_L2"/>
</dbReference>
<dbReference type="Pfam" id="PF00513">
    <property type="entry name" value="Late_protein_L2"/>
    <property type="match status" value="1"/>
</dbReference>